<accession>P44424</accession>
<reference key="1">
    <citation type="journal article" date="1995" name="Science">
        <title>Whole-genome random sequencing and assembly of Haemophilus influenzae Rd.</title>
        <authorList>
            <person name="Fleischmann R.D."/>
            <person name="Adams M.D."/>
            <person name="White O."/>
            <person name="Clayton R.A."/>
            <person name="Kirkness E.F."/>
            <person name="Kerlavage A.R."/>
            <person name="Bult C.J."/>
            <person name="Tomb J.-F."/>
            <person name="Dougherty B.A."/>
            <person name="Merrick J.M."/>
            <person name="McKenney K."/>
            <person name="Sutton G.G."/>
            <person name="FitzHugh W."/>
            <person name="Fields C.A."/>
            <person name="Gocayne J.D."/>
            <person name="Scott J.D."/>
            <person name="Shirley R."/>
            <person name="Liu L.-I."/>
            <person name="Glodek A."/>
            <person name="Kelley J.M."/>
            <person name="Weidman J.F."/>
            <person name="Phillips C.A."/>
            <person name="Spriggs T."/>
            <person name="Hedblom E."/>
            <person name="Cotton M.D."/>
            <person name="Utterback T.R."/>
            <person name="Hanna M.C."/>
            <person name="Nguyen D.T."/>
            <person name="Saudek D.M."/>
            <person name="Brandon R.C."/>
            <person name="Fine L.D."/>
            <person name="Fritchman J.L."/>
            <person name="Fuhrmann J.L."/>
            <person name="Geoghagen N.S.M."/>
            <person name="Gnehm C.L."/>
            <person name="McDonald L.A."/>
            <person name="Small K.V."/>
            <person name="Fraser C.M."/>
            <person name="Smith H.O."/>
            <person name="Venter J.C."/>
        </authorList>
    </citation>
    <scope>NUCLEOTIDE SEQUENCE [LARGE SCALE GENOMIC DNA]</scope>
    <source>
        <strain>ATCC 51907 / DSM 11121 / KW20 / Rd</strain>
    </source>
</reference>
<sequence>MYKTTGLTHLINSTKYSLQGLKSAFKNETAFRHECFLACILIPLTFFLGETKIEIILMISSVLLVMALELLNSAVETVVDRIGTERHELSGRAKDQGSASVFIALCIVGIVWGGILFF</sequence>
<evidence type="ECO:0000250" key="1">
    <source>
        <dbReference type="UniProtKB" id="P0ABN1"/>
    </source>
</evidence>
<evidence type="ECO:0000255" key="2"/>
<evidence type="ECO:0000305" key="3"/>
<name>KDGL_HAEIN</name>
<feature type="chain" id="PRO_0000195263" description="Diacylglycerol kinase">
    <location>
        <begin position="1"/>
        <end position="118"/>
    </location>
</feature>
<feature type="transmembrane region" description="Helical" evidence="2">
    <location>
        <begin position="29"/>
        <end position="49"/>
    </location>
</feature>
<feature type="transmembrane region" description="Helical" evidence="2">
    <location>
        <begin position="55"/>
        <end position="75"/>
    </location>
</feature>
<feature type="transmembrane region" description="Helical" evidence="2">
    <location>
        <begin position="98"/>
        <end position="118"/>
    </location>
</feature>
<feature type="active site" description="Proton acceptor" evidence="1">
    <location>
        <position position="69"/>
    </location>
</feature>
<feature type="binding site" evidence="1">
    <location>
        <position position="28"/>
    </location>
    <ligand>
        <name>a divalent metal cation</name>
        <dbReference type="ChEBI" id="CHEBI:60240"/>
    </ligand>
</feature>
<feature type="binding site" evidence="1">
    <location>
        <position position="76"/>
    </location>
    <ligand>
        <name>a divalent metal cation</name>
        <dbReference type="ChEBI" id="CHEBI:60240"/>
    </ligand>
</feature>
<keyword id="KW-0067">ATP-binding</keyword>
<keyword id="KW-0997">Cell inner membrane</keyword>
<keyword id="KW-1003">Cell membrane</keyword>
<keyword id="KW-0418">Kinase</keyword>
<keyword id="KW-0444">Lipid biosynthesis</keyword>
<keyword id="KW-0443">Lipid metabolism</keyword>
<keyword id="KW-0460">Magnesium</keyword>
<keyword id="KW-0472">Membrane</keyword>
<keyword id="KW-0479">Metal-binding</keyword>
<keyword id="KW-0547">Nucleotide-binding</keyword>
<keyword id="KW-0594">Phospholipid biosynthesis</keyword>
<keyword id="KW-1208">Phospholipid metabolism</keyword>
<keyword id="KW-1185">Reference proteome</keyword>
<keyword id="KW-0808">Transferase</keyword>
<keyword id="KW-0812">Transmembrane</keyword>
<keyword id="KW-1133">Transmembrane helix</keyword>
<organism>
    <name type="scientific">Haemophilus influenzae (strain ATCC 51907 / DSM 11121 / KW20 / Rd)</name>
    <dbReference type="NCBI Taxonomy" id="71421"/>
    <lineage>
        <taxon>Bacteria</taxon>
        <taxon>Pseudomonadati</taxon>
        <taxon>Pseudomonadota</taxon>
        <taxon>Gammaproteobacteria</taxon>
        <taxon>Pasteurellales</taxon>
        <taxon>Pasteurellaceae</taxon>
        <taxon>Haemophilus</taxon>
    </lineage>
</organism>
<comment type="function">
    <text evidence="1">Catalyzes the ATP-dependent phosphorylation of sn-l,2-diacylglycerol (DAG) to phosphatidic acid. Involved in the recycling of diacylglycerol produced as a by-product during membrane-derived oligosaccharide (MDO) biosynthesis.</text>
</comment>
<comment type="catalytic activity">
    <reaction evidence="1">
        <text>a 1,2-diacyl-sn-glycerol + ATP = a 1,2-diacyl-sn-glycero-3-phosphate + ADP + H(+)</text>
        <dbReference type="Rhea" id="RHEA:10272"/>
        <dbReference type="ChEBI" id="CHEBI:15378"/>
        <dbReference type="ChEBI" id="CHEBI:17815"/>
        <dbReference type="ChEBI" id="CHEBI:30616"/>
        <dbReference type="ChEBI" id="CHEBI:58608"/>
        <dbReference type="ChEBI" id="CHEBI:456216"/>
        <dbReference type="EC" id="2.7.1.107"/>
    </reaction>
</comment>
<comment type="cofactor">
    <cofactor evidence="1">
        <name>Mg(2+)</name>
        <dbReference type="ChEBI" id="CHEBI:18420"/>
    </cofactor>
</comment>
<comment type="subcellular location">
    <subcellularLocation>
        <location evidence="1">Cell inner membrane</location>
        <topology evidence="1">Multi-pass membrane protein</topology>
    </subcellularLocation>
</comment>
<comment type="similarity">
    <text evidence="3">Belongs to the bacterial diacylglycerol kinase family.</text>
</comment>
<dbReference type="EC" id="2.7.1.107" evidence="1"/>
<dbReference type="EMBL" id="L42023">
    <property type="protein sequence ID" value="AAC21997.1"/>
    <property type="molecule type" value="Genomic_DNA"/>
</dbReference>
<dbReference type="PIR" id="E64062">
    <property type="entry name" value="E64062"/>
</dbReference>
<dbReference type="RefSeq" id="NP_438499.1">
    <property type="nucleotide sequence ID" value="NC_000907.1"/>
</dbReference>
<dbReference type="SMR" id="P44424"/>
<dbReference type="STRING" id="71421.HI_0335"/>
<dbReference type="EnsemblBacteria" id="AAC21997">
    <property type="protein sequence ID" value="AAC21997"/>
    <property type="gene ID" value="HI_0335"/>
</dbReference>
<dbReference type="KEGG" id="hin:HI_0335"/>
<dbReference type="PATRIC" id="fig|71421.8.peg.352"/>
<dbReference type="eggNOG" id="COG0818">
    <property type="taxonomic scope" value="Bacteria"/>
</dbReference>
<dbReference type="HOGENOM" id="CLU_112343_3_1_6"/>
<dbReference type="OrthoDB" id="9796011at2"/>
<dbReference type="PhylomeDB" id="P44424"/>
<dbReference type="BioCyc" id="HINF71421:G1GJ1-351-MONOMER"/>
<dbReference type="Proteomes" id="UP000000579">
    <property type="component" value="Chromosome"/>
</dbReference>
<dbReference type="GO" id="GO:0005886">
    <property type="term" value="C:plasma membrane"/>
    <property type="evidence" value="ECO:0000318"/>
    <property type="project" value="GO_Central"/>
</dbReference>
<dbReference type="GO" id="GO:0005524">
    <property type="term" value="F:ATP binding"/>
    <property type="evidence" value="ECO:0007669"/>
    <property type="project" value="UniProtKB-KW"/>
</dbReference>
<dbReference type="GO" id="GO:0004143">
    <property type="term" value="F:ATP-dependent diacylglycerol kinase activity"/>
    <property type="evidence" value="ECO:0007669"/>
    <property type="project" value="UniProtKB-EC"/>
</dbReference>
<dbReference type="GO" id="GO:0001727">
    <property type="term" value="F:lipid kinase activity"/>
    <property type="evidence" value="ECO:0000318"/>
    <property type="project" value="GO_Central"/>
</dbReference>
<dbReference type="GO" id="GO:0046872">
    <property type="term" value="F:metal ion binding"/>
    <property type="evidence" value="ECO:0007669"/>
    <property type="project" value="UniProtKB-KW"/>
</dbReference>
<dbReference type="GO" id="GO:0006654">
    <property type="term" value="P:phosphatidic acid biosynthetic process"/>
    <property type="evidence" value="ECO:0007669"/>
    <property type="project" value="InterPro"/>
</dbReference>
<dbReference type="CDD" id="cd14264">
    <property type="entry name" value="DAGK_IM"/>
    <property type="match status" value="1"/>
</dbReference>
<dbReference type="Gene3D" id="1.10.287.3610">
    <property type="match status" value="1"/>
</dbReference>
<dbReference type="InterPro" id="IPR000829">
    <property type="entry name" value="DAGK"/>
</dbReference>
<dbReference type="InterPro" id="IPR033718">
    <property type="entry name" value="DAGK_prok"/>
</dbReference>
<dbReference type="InterPro" id="IPR036945">
    <property type="entry name" value="DAGK_sf"/>
</dbReference>
<dbReference type="PANTHER" id="PTHR34299">
    <property type="entry name" value="DIACYLGLYCEROL KINASE"/>
    <property type="match status" value="1"/>
</dbReference>
<dbReference type="PANTHER" id="PTHR34299:SF1">
    <property type="entry name" value="DIACYLGLYCEROL KINASE"/>
    <property type="match status" value="1"/>
</dbReference>
<dbReference type="Pfam" id="PF01219">
    <property type="entry name" value="DAGK_prokar"/>
    <property type="match status" value="1"/>
</dbReference>
<dbReference type="PROSITE" id="PS01069">
    <property type="entry name" value="DAGK_PROKAR"/>
    <property type="match status" value="1"/>
</dbReference>
<proteinExistence type="inferred from homology"/>
<gene>
    <name type="primary">dgkA</name>
    <name type="ordered locus">HI_0335</name>
</gene>
<protein>
    <recommendedName>
        <fullName evidence="1">Diacylglycerol kinase</fullName>
        <shortName evidence="1">DAGK</shortName>
        <ecNumber evidence="1">2.7.1.107</ecNumber>
    </recommendedName>
    <alternativeName>
        <fullName evidence="1">Diglyceride kinase</fullName>
        <shortName evidence="1">DGK</shortName>
    </alternativeName>
</protein>